<evidence type="ECO:0000269" key="1">
    <source>
    </source>
</evidence>
<evidence type="ECO:0000269" key="2">
    <source>
    </source>
</evidence>
<evidence type="ECO:0000269" key="3">
    <source>
    </source>
</evidence>
<evidence type="ECO:0000269" key="4">
    <source>
    </source>
</evidence>
<evidence type="ECO:0007829" key="5">
    <source>
        <dbReference type="PDB" id="2DZN"/>
    </source>
</evidence>
<comment type="function">
    <text evidence="2 3 4">Acts as a chaperone during the assembly of the 26S proteasome, specifically of the 19S regulatory complex (RC) and appears to have an overlapping role with RPN14.</text>
</comment>
<comment type="subunit">
    <text evidence="2">Interacts with RPT3.</text>
</comment>
<comment type="interaction">
    <interactant intactId="EBI-14028">
        <id>P50086</id>
    </interactant>
    <interactant intactId="EBI-21152">
        <id>P38348</id>
        <label>HSM3</label>
    </interactant>
    <organismsDiffer>false</organismsDiffer>
    <experiments>8</experiments>
</comment>
<comment type="interaction">
    <interactant intactId="EBI-14028">
        <id>P50086</id>
    </interactant>
    <interactant intactId="EBI-23691">
        <id>P53196</id>
        <label>RPN14</label>
    </interactant>
    <organismsDiffer>false</organismsDiffer>
    <experiments>6</experiments>
</comment>
<comment type="interaction">
    <interactant intactId="EBI-14028">
        <id>P50086</id>
    </interactant>
    <interactant intactId="EBI-13905">
        <id>P33298</id>
        <label>RPT3</label>
    </interactant>
    <organismsDiffer>false</organismsDiffer>
    <experiments>12</experiments>
</comment>
<comment type="miscellaneous">
    <text evidence="1">Present with 319 molecules/cell in log phase SD medium.</text>
</comment>
<gene>
    <name type="primary">NAS6</name>
    <name type="ordered locus">YGR232W</name>
    <name type="ORF">G8564</name>
</gene>
<reference key="1">
    <citation type="journal article" date="1996" name="Yeast">
        <title>Sequence analysis of the 43 kb CRM1-YLM9-PET54-DIE2-SMI1-PHO81-YHB4-PFK1 region from the right arm of Saccharomyces cerevisiae chromosome VII.</title>
        <authorList>
            <person name="van der Aart Q.J.M."/>
            <person name="Kleine K."/>
            <person name="Steensma H.Y."/>
        </authorList>
    </citation>
    <scope>NUCLEOTIDE SEQUENCE [GENOMIC DNA]</scope>
    <source>
        <strain>ATCC 204508 / S288c</strain>
    </source>
</reference>
<reference key="2">
    <citation type="journal article" date="1997" name="Nature">
        <title>The nucleotide sequence of Saccharomyces cerevisiae chromosome VII.</title>
        <authorList>
            <person name="Tettelin H."/>
            <person name="Agostoni-Carbone M.L."/>
            <person name="Albermann K."/>
            <person name="Albers M."/>
            <person name="Arroyo J."/>
            <person name="Backes U."/>
            <person name="Barreiros T."/>
            <person name="Bertani I."/>
            <person name="Bjourson A.J."/>
            <person name="Brueckner M."/>
            <person name="Bruschi C.V."/>
            <person name="Carignani G."/>
            <person name="Castagnoli L."/>
            <person name="Cerdan E."/>
            <person name="Clemente M.L."/>
            <person name="Coblenz A."/>
            <person name="Coglievina M."/>
            <person name="Coissac E."/>
            <person name="Defoor E."/>
            <person name="Del Bino S."/>
            <person name="Delius H."/>
            <person name="Delneri D."/>
            <person name="de Wergifosse P."/>
            <person name="Dujon B."/>
            <person name="Durand P."/>
            <person name="Entian K.-D."/>
            <person name="Eraso P."/>
            <person name="Escribano V."/>
            <person name="Fabiani L."/>
            <person name="Fartmann B."/>
            <person name="Feroli F."/>
            <person name="Feuermann M."/>
            <person name="Frontali L."/>
            <person name="Garcia-Gonzalez M."/>
            <person name="Garcia-Saez M.I."/>
            <person name="Goffeau A."/>
            <person name="Guerreiro P."/>
            <person name="Hani J."/>
            <person name="Hansen M."/>
            <person name="Hebling U."/>
            <person name="Hernandez K."/>
            <person name="Heumann K."/>
            <person name="Hilger F."/>
            <person name="Hofmann B."/>
            <person name="Indge K.J."/>
            <person name="James C.M."/>
            <person name="Klima R."/>
            <person name="Koetter P."/>
            <person name="Kramer B."/>
            <person name="Kramer W."/>
            <person name="Lauquin G."/>
            <person name="Leuther H."/>
            <person name="Louis E.J."/>
            <person name="Maillier E."/>
            <person name="Marconi A."/>
            <person name="Martegani E."/>
            <person name="Mazon M.J."/>
            <person name="Mazzoni C."/>
            <person name="McReynolds A.D.K."/>
            <person name="Melchioretto P."/>
            <person name="Mewes H.-W."/>
            <person name="Minenkova O."/>
            <person name="Mueller-Auer S."/>
            <person name="Nawrocki A."/>
            <person name="Netter P."/>
            <person name="Neu R."/>
            <person name="Nombela C."/>
            <person name="Oliver S.G."/>
            <person name="Panzeri L."/>
            <person name="Paoluzi S."/>
            <person name="Plevani P."/>
            <person name="Portetelle D."/>
            <person name="Portillo F."/>
            <person name="Potier S."/>
            <person name="Purnelle B."/>
            <person name="Rieger M."/>
            <person name="Riles L."/>
            <person name="Rinaldi T."/>
            <person name="Robben J."/>
            <person name="Rodrigues-Pousada C."/>
            <person name="Rodriguez-Belmonte E."/>
            <person name="Rodriguez-Torres A.M."/>
            <person name="Rose M."/>
            <person name="Ruzzi M."/>
            <person name="Saliola M."/>
            <person name="Sanchez-Perez M."/>
            <person name="Schaefer B."/>
            <person name="Schaefer M."/>
            <person name="Scharfe M."/>
            <person name="Schmidheini T."/>
            <person name="Schreer A."/>
            <person name="Skala J."/>
            <person name="Souciet J.-L."/>
            <person name="Steensma H.Y."/>
            <person name="Talla E."/>
            <person name="Thierry A."/>
            <person name="Vandenbol M."/>
            <person name="van der Aart Q.J.M."/>
            <person name="Van Dyck L."/>
            <person name="Vanoni M."/>
            <person name="Verhasselt P."/>
            <person name="Voet M."/>
            <person name="Volckaert G."/>
            <person name="Wambutt R."/>
            <person name="Watson M.D."/>
            <person name="Weber N."/>
            <person name="Wedler E."/>
            <person name="Wedler H."/>
            <person name="Wipfli P."/>
            <person name="Wolf K."/>
            <person name="Wright L.F."/>
            <person name="Zaccaria P."/>
            <person name="Zimmermann M."/>
            <person name="Zollner A."/>
            <person name="Kleine K."/>
        </authorList>
    </citation>
    <scope>NUCLEOTIDE SEQUENCE [LARGE SCALE GENOMIC DNA]</scope>
    <source>
        <strain>ATCC 204508 / S288c</strain>
    </source>
</reference>
<reference key="3">
    <citation type="journal article" date="2014" name="G3 (Bethesda)">
        <title>The reference genome sequence of Saccharomyces cerevisiae: Then and now.</title>
        <authorList>
            <person name="Engel S.R."/>
            <person name="Dietrich F.S."/>
            <person name="Fisk D.G."/>
            <person name="Binkley G."/>
            <person name="Balakrishnan R."/>
            <person name="Costanzo M.C."/>
            <person name="Dwight S.S."/>
            <person name="Hitz B.C."/>
            <person name="Karra K."/>
            <person name="Nash R.S."/>
            <person name="Weng S."/>
            <person name="Wong E.D."/>
            <person name="Lloyd P."/>
            <person name="Skrzypek M.S."/>
            <person name="Miyasato S.R."/>
            <person name="Simison M."/>
            <person name="Cherry J.M."/>
        </authorList>
    </citation>
    <scope>GENOME REANNOTATION</scope>
    <source>
        <strain>ATCC 204508 / S288c</strain>
    </source>
</reference>
<reference key="4">
    <citation type="journal article" date="2007" name="Genome Res.">
        <title>Approaching a complete repository of sequence-verified protein-encoding clones for Saccharomyces cerevisiae.</title>
        <authorList>
            <person name="Hu Y."/>
            <person name="Rolfs A."/>
            <person name="Bhullar B."/>
            <person name="Murthy T.V.S."/>
            <person name="Zhu C."/>
            <person name="Berger M.F."/>
            <person name="Camargo A.A."/>
            <person name="Kelley F."/>
            <person name="McCarron S."/>
            <person name="Jepson D."/>
            <person name="Richardson A."/>
            <person name="Raphael J."/>
            <person name="Moreira D."/>
            <person name="Taycher E."/>
            <person name="Zuo D."/>
            <person name="Mohr S."/>
            <person name="Kane M.F."/>
            <person name="Williamson J."/>
            <person name="Simpson A.J.G."/>
            <person name="Bulyk M.L."/>
            <person name="Harlow E."/>
            <person name="Marsischky G."/>
            <person name="Kolodner R.D."/>
            <person name="LaBaer J."/>
        </authorList>
    </citation>
    <scope>NUCLEOTIDE SEQUENCE [GENOMIC DNA]</scope>
    <source>
        <strain>ATCC 204508 / S288c</strain>
    </source>
</reference>
<reference key="5">
    <citation type="journal article" date="1998" name="Gene">
        <title>cDNA cloning and functional analysis of p28 (Nas6p) and p40.5 (Nas7p), two novel regulatory subunits of the 26S proteasome.</title>
        <authorList>
            <person name="Hori T."/>
            <person name="Kato S."/>
            <person name="Saeki M."/>
            <person name="DeMartino G.N."/>
            <person name="Slaughter C.A."/>
            <person name="Takeuchi J."/>
            <person name="Toh-e A."/>
            <person name="Tanaka K."/>
        </authorList>
    </citation>
    <scope>FUNCTION</scope>
</reference>
<reference key="6">
    <citation type="journal article" date="2003" name="Nature">
        <title>Global analysis of protein expression in yeast.</title>
        <authorList>
            <person name="Ghaemmaghami S."/>
            <person name="Huh W.-K."/>
            <person name="Bower K."/>
            <person name="Howson R.W."/>
            <person name="Belle A."/>
            <person name="Dephoure N."/>
            <person name="O'Shea E.K."/>
            <person name="Weissman J.S."/>
        </authorList>
    </citation>
    <scope>LEVEL OF PROTEIN EXPRESSION [LARGE SCALE ANALYSIS]</scope>
</reference>
<reference key="7">
    <citation type="journal article" date="2009" name="Cell">
        <title>Multiple assembly chaperones govern biogenesis of the proteasome regulatory particle base.</title>
        <authorList>
            <person name="Funakoshi M."/>
            <person name="Tomko R.J. Jr."/>
            <person name="Kobayashi H."/>
            <person name="Hochstrasser M."/>
        </authorList>
    </citation>
    <scope>FUNCTION AS PROTEASOME CHAPERONE</scope>
</reference>
<reference key="8">
    <citation type="journal article" date="2009" name="Nature">
        <title>Chaperone-mediated pathway of proteasome regulatory particle assembly.</title>
        <authorList>
            <person name="Roelofs J."/>
            <person name="Park S."/>
            <person name="Haas W."/>
            <person name="Tian G."/>
            <person name="McAllister F.E."/>
            <person name="Huo Y."/>
            <person name="Lee B.H."/>
            <person name="Zhang F."/>
            <person name="Shi Y."/>
            <person name="Gygi S.P."/>
            <person name="Finley D."/>
        </authorList>
    </citation>
    <scope>FUNCTION AS PROTEASOME CHAPERONE</scope>
    <scope>INTERACTION WITH RPT3</scope>
</reference>
<reference key="9">
    <citation type="journal article" date="2004" name="J. Biol. Chem.">
        <title>Crystal structure of the homolog of the oncoprotein gankyrin, an interactor of Rb and CDK4/6.</title>
        <authorList>
            <person name="Padmanabhan B."/>
            <person name="Adachi N."/>
            <person name="Kataoka K."/>
            <person name="Horikoshi M."/>
        </authorList>
    </citation>
    <scope>X-RAY CRYSTALLOGRAPHY (2.3 ANGSTROMS)</scope>
</reference>
<reference key="10">
    <citation type="submission" date="2005-06" db="PDB data bank">
        <title>Structural comparison of NAS6p protein structures in two different crystal forms.</title>
        <authorList>
            <consortium name="RIKEN structural genomics initiative (RSGI)"/>
        </authorList>
    </citation>
    <scope>X-RAY CRYSTALLOGRAPHY (2.53 ANGSTROMS)</scope>
</reference>
<accession>P50086</accession>
<accession>D6VV12</accession>
<protein>
    <recommendedName>
        <fullName>Probable 26S proteasome regulatory subunit p28</fullName>
    </recommendedName>
    <alternativeName>
        <fullName>Proteasome non-ATPase subunit 6</fullName>
    </alternativeName>
</protein>
<keyword id="KW-0002">3D-structure</keyword>
<keyword id="KW-0040">ANK repeat</keyword>
<keyword id="KW-0143">Chaperone</keyword>
<keyword id="KW-1185">Reference proteome</keyword>
<keyword id="KW-0677">Repeat</keyword>
<dbReference type="EMBL" id="X87941">
    <property type="protein sequence ID" value="CAA61182.1"/>
    <property type="molecule type" value="Genomic_DNA"/>
</dbReference>
<dbReference type="EMBL" id="Z73017">
    <property type="protein sequence ID" value="CAA97260.1"/>
    <property type="molecule type" value="Genomic_DNA"/>
</dbReference>
<dbReference type="EMBL" id="AY558275">
    <property type="protein sequence ID" value="AAS56601.1"/>
    <property type="molecule type" value="Genomic_DNA"/>
</dbReference>
<dbReference type="EMBL" id="BK006941">
    <property type="protein sequence ID" value="DAA08323.1"/>
    <property type="molecule type" value="Genomic_DNA"/>
</dbReference>
<dbReference type="PIR" id="S57697">
    <property type="entry name" value="S57697"/>
</dbReference>
<dbReference type="RefSeq" id="NP_011748.3">
    <property type="nucleotide sequence ID" value="NM_001181361.3"/>
</dbReference>
<dbReference type="PDB" id="1IXV">
    <property type="method" value="X-ray"/>
    <property type="resolution" value="2.30 A"/>
    <property type="chains" value="A=1-228"/>
</dbReference>
<dbReference type="PDB" id="1WG0">
    <property type="method" value="X-ray"/>
    <property type="resolution" value="2.53 A"/>
    <property type="chains" value="A=1-228"/>
</dbReference>
<dbReference type="PDB" id="2DZN">
    <property type="method" value="X-ray"/>
    <property type="resolution" value="2.20 A"/>
    <property type="chains" value="A/C/E=1-228"/>
</dbReference>
<dbReference type="PDB" id="2DZO">
    <property type="method" value="X-ray"/>
    <property type="resolution" value="3.00 A"/>
    <property type="chains" value="A/C=1-228"/>
</dbReference>
<dbReference type="PDBsum" id="1IXV"/>
<dbReference type="PDBsum" id="1WG0"/>
<dbReference type="PDBsum" id="2DZN"/>
<dbReference type="PDBsum" id="2DZO"/>
<dbReference type="SMR" id="P50086"/>
<dbReference type="BioGRID" id="33484">
    <property type="interactions" value="89"/>
</dbReference>
<dbReference type="DIP" id="DIP-1591N"/>
<dbReference type="FunCoup" id="P50086">
    <property type="interactions" value="218"/>
</dbReference>
<dbReference type="IntAct" id="P50086">
    <property type="interactions" value="34"/>
</dbReference>
<dbReference type="MINT" id="P50086"/>
<dbReference type="STRING" id="4932.YGR232W"/>
<dbReference type="CarbonylDB" id="P50086"/>
<dbReference type="iPTMnet" id="P50086"/>
<dbReference type="PaxDb" id="4932-YGR232W"/>
<dbReference type="PeptideAtlas" id="P50086"/>
<dbReference type="EnsemblFungi" id="YGR232W_mRNA">
    <property type="protein sequence ID" value="YGR232W"/>
    <property type="gene ID" value="YGR232W"/>
</dbReference>
<dbReference type="GeneID" id="853147"/>
<dbReference type="KEGG" id="sce:YGR232W"/>
<dbReference type="AGR" id="SGD:S000003464"/>
<dbReference type="SGD" id="S000003464">
    <property type="gene designation" value="NAS6"/>
</dbReference>
<dbReference type="VEuPathDB" id="FungiDB:YGR232W"/>
<dbReference type="eggNOG" id="KOG4412">
    <property type="taxonomic scope" value="Eukaryota"/>
</dbReference>
<dbReference type="GeneTree" id="ENSGT00940000153404"/>
<dbReference type="HOGENOM" id="CLU_000134_18_2_1"/>
<dbReference type="InParanoid" id="P50086"/>
<dbReference type="OMA" id="WAVAYNR"/>
<dbReference type="OrthoDB" id="539213at2759"/>
<dbReference type="BioCyc" id="YEAST:G3O-30910-MONOMER"/>
<dbReference type="BioGRID-ORCS" id="853147">
    <property type="hits" value="2 hits in 10 CRISPR screens"/>
</dbReference>
<dbReference type="EvolutionaryTrace" id="P50086"/>
<dbReference type="PRO" id="PR:P50086"/>
<dbReference type="Proteomes" id="UP000002311">
    <property type="component" value="Chromosome VII"/>
</dbReference>
<dbReference type="RNAct" id="P50086">
    <property type="molecule type" value="protein"/>
</dbReference>
<dbReference type="GO" id="GO:0005829">
    <property type="term" value="C:cytosol"/>
    <property type="evidence" value="ECO:0000314"/>
    <property type="project" value="SGD"/>
</dbReference>
<dbReference type="GO" id="GO:0005634">
    <property type="term" value="C:nucleus"/>
    <property type="evidence" value="ECO:0000314"/>
    <property type="project" value="SGD"/>
</dbReference>
<dbReference type="GO" id="GO:1904855">
    <property type="term" value="F:proteasome regulatory particle binding"/>
    <property type="evidence" value="ECO:0000314"/>
    <property type="project" value="SGD"/>
</dbReference>
<dbReference type="GO" id="GO:0044183">
    <property type="term" value="F:protein folding chaperone"/>
    <property type="evidence" value="ECO:0000314"/>
    <property type="project" value="SGD"/>
</dbReference>
<dbReference type="GO" id="GO:0070682">
    <property type="term" value="P:proteasome regulatory particle assembly"/>
    <property type="evidence" value="ECO:0000315"/>
    <property type="project" value="SGD"/>
</dbReference>
<dbReference type="FunFam" id="1.25.40.20:FF:000385">
    <property type="entry name" value="Probable 26S proteasome regulatory subunit p28"/>
    <property type="match status" value="1"/>
</dbReference>
<dbReference type="Gene3D" id="1.25.40.20">
    <property type="entry name" value="Ankyrin repeat-containing domain"/>
    <property type="match status" value="1"/>
</dbReference>
<dbReference type="InterPro" id="IPR002110">
    <property type="entry name" value="Ankyrin_rpt"/>
</dbReference>
<dbReference type="InterPro" id="IPR036770">
    <property type="entry name" value="Ankyrin_rpt-contain_sf"/>
</dbReference>
<dbReference type="PANTHER" id="PTHR24171:SF9">
    <property type="entry name" value="ANKYRIN REPEAT DOMAIN-CONTAINING PROTEIN 39"/>
    <property type="match status" value="1"/>
</dbReference>
<dbReference type="PANTHER" id="PTHR24171">
    <property type="entry name" value="ANKYRIN REPEAT DOMAIN-CONTAINING PROTEIN 39-RELATED"/>
    <property type="match status" value="1"/>
</dbReference>
<dbReference type="Pfam" id="PF12796">
    <property type="entry name" value="Ank_2"/>
    <property type="match status" value="2"/>
</dbReference>
<dbReference type="PRINTS" id="PR01415">
    <property type="entry name" value="ANKYRIN"/>
</dbReference>
<dbReference type="SMART" id="SM00248">
    <property type="entry name" value="ANK"/>
    <property type="match status" value="6"/>
</dbReference>
<dbReference type="SUPFAM" id="SSF48403">
    <property type="entry name" value="Ankyrin repeat"/>
    <property type="match status" value="1"/>
</dbReference>
<dbReference type="PROSITE" id="PS50297">
    <property type="entry name" value="ANK_REP_REGION"/>
    <property type="match status" value="1"/>
</dbReference>
<dbReference type="PROSITE" id="PS50088">
    <property type="entry name" value="ANK_REPEAT"/>
    <property type="match status" value="4"/>
</dbReference>
<sequence>MSNYPLHQACMENEFFKVQELLHSKPSLLLQKDQDGRIPLHWSVSFQAHEITSFLLSKMENVNLDDYPDDSGWTPFHIACSVGNLEVVKSLYDRPLKPDLNKITNQGVTCLHLAVGKKWFEVSQFLIENGASVRIKDKFNQIPLHRAASVGSLKLIELLCGLGKSAVNWQDKQGWTPLFHALAEGHGDAAVLLVEKYGAEYDLVDNKGAKAEDVALNEQVKKFFLNNV</sequence>
<organism>
    <name type="scientific">Saccharomyces cerevisiae (strain ATCC 204508 / S288c)</name>
    <name type="common">Baker's yeast</name>
    <dbReference type="NCBI Taxonomy" id="559292"/>
    <lineage>
        <taxon>Eukaryota</taxon>
        <taxon>Fungi</taxon>
        <taxon>Dikarya</taxon>
        <taxon>Ascomycota</taxon>
        <taxon>Saccharomycotina</taxon>
        <taxon>Saccharomycetes</taxon>
        <taxon>Saccharomycetales</taxon>
        <taxon>Saccharomycetaceae</taxon>
        <taxon>Saccharomyces</taxon>
    </lineage>
</organism>
<name>PSD10_YEAST</name>
<proteinExistence type="evidence at protein level"/>
<feature type="chain" id="PRO_0000067048" description="Probable 26S proteasome regulatory subunit p28">
    <location>
        <begin position="1"/>
        <end position="228"/>
    </location>
</feature>
<feature type="repeat" description="ANK 1">
    <location>
        <begin position="1"/>
        <end position="30"/>
    </location>
</feature>
<feature type="repeat" description="ANK 2">
    <location>
        <begin position="35"/>
        <end position="64"/>
    </location>
</feature>
<feature type="repeat" description="ANK 3">
    <location>
        <begin position="71"/>
        <end position="100"/>
    </location>
</feature>
<feature type="repeat" description="ANK 4">
    <location>
        <begin position="106"/>
        <end position="135"/>
    </location>
</feature>
<feature type="repeat" description="ANK 5">
    <location>
        <begin position="139"/>
        <end position="168"/>
    </location>
</feature>
<feature type="repeat" description="ANK 6">
    <location>
        <begin position="173"/>
        <end position="203"/>
    </location>
</feature>
<feature type="helix" evidence="5">
    <location>
        <begin position="5"/>
        <end position="11"/>
    </location>
</feature>
<feature type="helix" evidence="5">
    <location>
        <begin position="15"/>
        <end position="24"/>
    </location>
</feature>
<feature type="helix" evidence="5">
    <location>
        <begin position="26"/>
        <end position="28"/>
    </location>
</feature>
<feature type="helix" evidence="5">
    <location>
        <begin position="39"/>
        <end position="45"/>
    </location>
</feature>
<feature type="helix" evidence="5">
    <location>
        <begin position="49"/>
        <end position="57"/>
    </location>
</feature>
<feature type="helix" evidence="5">
    <location>
        <begin position="64"/>
        <end position="66"/>
    </location>
</feature>
<feature type="helix" evidence="5">
    <location>
        <begin position="75"/>
        <end position="82"/>
    </location>
</feature>
<feature type="helix" evidence="5">
    <location>
        <begin position="85"/>
        <end position="92"/>
    </location>
</feature>
<feature type="strand" evidence="5">
    <location>
        <begin position="93"/>
        <end position="96"/>
    </location>
</feature>
<feature type="helix" evidence="5">
    <location>
        <begin position="110"/>
        <end position="116"/>
    </location>
</feature>
<feature type="helix" evidence="5">
    <location>
        <begin position="120"/>
        <end position="128"/>
    </location>
</feature>
<feature type="helix" evidence="5">
    <location>
        <begin position="143"/>
        <end position="149"/>
    </location>
</feature>
<feature type="helix" evidence="5">
    <location>
        <begin position="153"/>
        <end position="160"/>
    </location>
</feature>
<feature type="turn" evidence="5">
    <location>
        <begin position="161"/>
        <end position="163"/>
    </location>
</feature>
<feature type="helix" evidence="5">
    <location>
        <begin position="177"/>
        <end position="183"/>
    </location>
</feature>
<feature type="helix" evidence="5">
    <location>
        <begin position="187"/>
        <end position="197"/>
    </location>
</feature>
<feature type="helix" evidence="5">
    <location>
        <begin position="211"/>
        <end position="214"/>
    </location>
</feature>
<feature type="helix" evidence="5">
    <location>
        <begin position="220"/>
        <end position="225"/>
    </location>
</feature>